<feature type="propeptide" id="PRO_0000004600" evidence="3">
    <location>
        <begin position="1"/>
        <end position="80"/>
    </location>
</feature>
<feature type="chain" id="PRO_0000004601" description="Caspase-4 subunit p20" evidence="37">
    <location>
        <begin position="81"/>
        <end position="266"/>
    </location>
</feature>
<feature type="propeptide" id="PRO_0000004602" evidence="36">
    <location>
        <begin position="267"/>
        <end position="285"/>
    </location>
</feature>
<feature type="chain" id="PRO_0000004603" description="Caspase-4 subunit p10" evidence="36 37">
    <location>
        <begin position="286"/>
        <end position="373"/>
    </location>
</feature>
<feature type="domain" description="CARD" evidence="4">
    <location>
        <begin position="1"/>
        <end position="91"/>
    </location>
</feature>
<feature type="region of interest" description="Required for LPS-binding" evidence="12">
    <location>
        <begin position="1"/>
        <end position="59"/>
    </location>
</feature>
<feature type="active site" evidence="1">
    <location>
        <position position="206"/>
    </location>
</feature>
<feature type="active site" evidence="2">
    <location>
        <position position="254"/>
    </location>
</feature>
<feature type="site" description="Cleavage; by autolysis" evidence="20">
    <location>
        <begin position="285"/>
        <end position="286"/>
    </location>
</feature>
<feature type="modified residue" description="Phosphoserine" evidence="2">
    <location>
        <position position="83"/>
    </location>
</feature>
<feature type="modified residue" description="(Microbial infection) ADP-riboxanated arginine" evidence="25">
    <location>
        <position position="310"/>
    </location>
</feature>
<feature type="splice variant" id="VSP_058183" description="In isoform 2." evidence="34">
    <original>ANLEMEEPEESLNTLKLCSPEEFTRLCREKT</original>
    <variation>DLPNKGGQWPYTKGSYHMQYRVQTSLTEVWG</variation>
    <location>
        <begin position="88"/>
        <end position="118"/>
    </location>
</feature>
<feature type="splice variant" id="VSP_058184" description="In isoform 2." evidence="34">
    <location>
        <begin position="119"/>
        <end position="373"/>
    </location>
</feature>
<feature type="mutagenesis site" description="Severely attenuated LPS-binding, LPS-induced oligomerization and activation, and LPS-induced pyroptosis." evidence="12">
    <original>K</original>
    <variation>E</variation>
    <location>
        <position position="19"/>
    </location>
</feature>
<feature type="mutagenesis site" description="No effect on LPS-binding, LPS-induced oligomerization, and LPS-induced pyroptosis; when associated with M-40." evidence="12">
    <original>K</original>
    <variation>E</variation>
    <location>
        <position position="38"/>
    </location>
</feature>
<feature type="mutagenesis site" description="No effect on LPS-binding, LPS-induced oligomerization, and LPS-induced pyroptosis; when associated with E-38." evidence="12">
    <original>E</original>
    <variation>M</variation>
    <location>
        <position position="40"/>
    </location>
</feature>
<feature type="mutagenesis site" description="Complete loss of LPS-binding, LPS-induced oligomerization, and LPS-induced pyroptosis; when associated with E-54 and A-55." evidence="12">
    <original>K</original>
    <variation>E</variation>
    <location>
        <position position="53"/>
    </location>
</feature>
<feature type="mutagenesis site" description="Complete loss of LPS-binding, LPS-induced oligomerization, and LPS-induced pyroptosis; when associated with E-53 and A-55." evidence="12">
    <original>R</original>
    <variation>E</variation>
    <location>
        <position position="54"/>
    </location>
</feature>
<feature type="mutagenesis site" description="Complete loss of LPS-binding, LPS-induced oligomerization, and LPS-induced pyroptosis; when associated with E-54 and A-55." evidence="12">
    <original>W</original>
    <variation>A</variation>
    <location>
        <position position="55"/>
    </location>
</feature>
<feature type="mutagenesis site" description="Severely attenuated LPS-binding, LPS-induced oligomerization and activation, and LPS-induced pyroptosis; when associated with E-63 and E-64." evidence="12">
    <original>K</original>
    <variation>E</variation>
    <location>
        <position position="62"/>
    </location>
</feature>
<feature type="mutagenesis site" description="Severely attenuated LPS-binding, LPS-induced oligomerization and activation, and LPS-induced pyroptosis; when associated with E-62 and E-64." evidence="12">
    <original>K</original>
    <variation>E</variation>
    <location>
        <position position="63"/>
    </location>
</feature>
<feature type="mutagenesis site" description="Severely attenuated LPS-binding, LPS-induced oligomerization and activation, and LPS-induced pyroptosis; when associated with E-62 and E-63." evidence="12">
    <original>K</original>
    <variation>E</variation>
    <location>
        <position position="64"/>
    </location>
</feature>
<feature type="mutagenesis site" description="Impaired NLRP6 inflammasome-dependent activation and release of IL1B and IL18." evidence="21">
    <original>D</original>
    <variation>N</variation>
    <location>
        <position position="80"/>
    </location>
</feature>
<feature type="mutagenesis site" description="Loss of catalytic activity and of autocatalytic processing. Loss of LPS-induced pyroptosis. No effect on the interaction with LPS." evidence="7 12 18 20 21">
    <original>C</original>
    <variation>A</variation>
    <location>
        <position position="254"/>
    </location>
</feature>
<feature type="mutagenesis site" description="No cell death.">
    <original>C</original>
    <variation>G</variation>
    <location>
        <position position="254"/>
    </location>
</feature>
<feature type="mutagenesis site" description="Impaired NLRP6 inflammasome-dependent activation and release of IL1B and IL18." evidence="21">
    <original>D</original>
    <variation>N</variation>
    <location>
        <position position="277"/>
    </location>
</feature>
<feature type="mutagenesis site" description="Loss of autocatalytic processing and subsequent activation." evidence="20">
    <original>D</original>
    <variation>A</variation>
    <location>
        <position position="285"/>
    </location>
</feature>
<feature type="mutagenesis site" description="Impaired NLRP6 inflammasome-dependent activation and release of IL1B and IL18." evidence="21">
    <original>D</original>
    <variation>N</variation>
    <location>
        <position position="285"/>
    </location>
</feature>
<feature type="mutagenesis site" description="Does not promote ability to cleave IL18." evidence="28">
    <original>L</original>
    <variation>K</variation>
    <location>
        <position position="289"/>
    </location>
</feature>
<feature type="mutagenesis site" description="Abolished ability to cleave Gasdermin-D (GSDMD)." evidence="25">
    <original>R</original>
    <variation>A</variation>
    <location>
        <position position="310"/>
    </location>
</feature>
<feature type="sequence conflict" description="In Ref. 7; AAH61255." evidence="35" ref="7">
    <original>E</original>
    <variation>K</variation>
    <location>
        <position position="126"/>
    </location>
</feature>
<feature type="sequence conflict" description="In Ref. 1; AAB09469." evidence="35" ref="1">
    <original>N</original>
    <variation>K</variation>
    <location>
        <position position="152"/>
    </location>
</feature>
<feature type="helix" evidence="45">
    <location>
        <begin position="107"/>
        <end position="116"/>
    </location>
</feature>
<feature type="helix" evidence="45">
    <location>
        <begin position="118"/>
        <end position="120"/>
    </location>
</feature>
<feature type="turn" evidence="45">
    <location>
        <begin position="127"/>
        <end position="129"/>
    </location>
</feature>
<feature type="strand" evidence="45">
    <location>
        <begin position="133"/>
        <end position="138"/>
    </location>
</feature>
<feature type="strand" evidence="45">
    <location>
        <begin position="143"/>
        <end position="145"/>
    </location>
</feature>
<feature type="helix" evidence="45">
    <location>
        <begin position="151"/>
        <end position="164"/>
    </location>
</feature>
<feature type="strand" evidence="45">
    <location>
        <begin position="168"/>
        <end position="174"/>
    </location>
</feature>
<feature type="helix" evidence="45">
    <location>
        <begin position="177"/>
        <end position="188"/>
    </location>
</feature>
<feature type="helix" evidence="45">
    <location>
        <begin position="191"/>
        <end position="193"/>
    </location>
</feature>
<feature type="strand" evidence="45">
    <location>
        <begin position="199"/>
        <end position="205"/>
    </location>
</feature>
<feature type="strand" evidence="45">
    <location>
        <begin position="209"/>
        <end position="213"/>
    </location>
</feature>
<feature type="strand" evidence="45">
    <location>
        <begin position="219"/>
        <end position="221"/>
    </location>
</feature>
<feature type="strand" evidence="45">
    <location>
        <begin position="224"/>
        <end position="226"/>
    </location>
</feature>
<feature type="helix" evidence="45">
    <location>
        <begin position="227"/>
        <end position="234"/>
    </location>
</feature>
<feature type="turn" evidence="45">
    <location>
        <begin position="236"/>
        <end position="238"/>
    </location>
</feature>
<feature type="helix" evidence="45">
    <location>
        <begin position="240"/>
        <end position="242"/>
    </location>
</feature>
<feature type="strand" evidence="45">
    <location>
        <begin position="247"/>
        <end position="253"/>
    </location>
</feature>
<feature type="strand" evidence="44">
    <location>
        <begin position="255"/>
        <end position="258"/>
    </location>
</feature>
<feature type="strand" evidence="45">
    <location>
        <begin position="260"/>
        <end position="264"/>
    </location>
</feature>
<feature type="strand" evidence="44">
    <location>
        <begin position="282"/>
        <end position="284"/>
    </location>
</feature>
<feature type="strand" evidence="45">
    <location>
        <begin position="288"/>
        <end position="293"/>
    </location>
</feature>
<feature type="strand" evidence="45">
    <location>
        <begin position="295"/>
        <end position="302"/>
    </location>
</feature>
<feature type="helix" evidence="43">
    <location>
        <begin position="305"/>
        <end position="307"/>
    </location>
</feature>
<feature type="strand" evidence="44">
    <location>
        <begin position="309"/>
        <end position="311"/>
    </location>
</feature>
<feature type="turn" evidence="44">
    <location>
        <begin position="312"/>
        <end position="314"/>
    </location>
</feature>
<feature type="helix" evidence="45">
    <location>
        <begin position="317"/>
        <end position="329"/>
    </location>
</feature>
<feature type="turn" evidence="45">
    <location>
        <begin position="330"/>
        <end position="332"/>
    </location>
</feature>
<feature type="helix" evidence="45">
    <location>
        <begin position="335"/>
        <end position="345"/>
    </location>
</feature>
<feature type="strand" evidence="45">
    <location>
        <begin position="357"/>
        <end position="361"/>
    </location>
</feature>
<gene>
    <name evidence="38" type="primary">Casp4</name>
    <name evidence="32 34" type="synonym">Casp11</name>
    <name type="synonym">Caspl</name>
    <name evidence="33" type="synonym">Ich3</name>
</gene>
<name>CASP4_MOUSE</name>
<proteinExistence type="evidence at protein level"/>
<dbReference type="EC" id="3.4.22.64" evidence="20"/>
<dbReference type="EMBL" id="U59463">
    <property type="protein sequence ID" value="AAB09469.1"/>
    <property type="molecule type" value="mRNA"/>
</dbReference>
<dbReference type="EMBL" id="Y13089">
    <property type="protein sequence ID" value="CAA73531.1"/>
    <property type="molecule type" value="mRNA"/>
</dbReference>
<dbReference type="EMBL" id="AB480706">
    <property type="protein sequence ID" value="BAH96541.1"/>
    <property type="molecule type" value="mRNA"/>
</dbReference>
<dbReference type="EMBL" id="AK151547">
    <property type="protein sequence ID" value="BAE30493.1"/>
    <property type="molecule type" value="mRNA"/>
</dbReference>
<dbReference type="EMBL" id="AK171877">
    <property type="protein sequence ID" value="BAE42715.1"/>
    <property type="molecule type" value="mRNA"/>
</dbReference>
<dbReference type="EMBL" id="AC141637">
    <property type="status" value="NOT_ANNOTATED_CDS"/>
    <property type="molecule type" value="Genomic_DNA"/>
</dbReference>
<dbReference type="EMBL" id="CH466636">
    <property type="protein sequence ID" value="EDL09318.1"/>
    <property type="molecule type" value="Genomic_DNA"/>
</dbReference>
<dbReference type="EMBL" id="BC061255">
    <property type="protein sequence ID" value="AAH61255.1"/>
    <property type="molecule type" value="mRNA"/>
</dbReference>
<dbReference type="CCDS" id="CCDS22799.1">
    <molecule id="P70343-1"/>
</dbReference>
<dbReference type="RefSeq" id="NP_031635.2">
    <molecule id="P70343-1"/>
    <property type="nucleotide sequence ID" value="NM_007609.3"/>
</dbReference>
<dbReference type="PDB" id="6KMT">
    <property type="method" value="X-ray"/>
    <property type="resolution" value="2.60 A"/>
    <property type="chains" value="A/B/C/D=101-373"/>
</dbReference>
<dbReference type="PDB" id="6KMU">
    <property type="method" value="X-ray"/>
    <property type="resolution" value="2.10 A"/>
    <property type="chains" value="A/E=102-285, B/F/H=288-373, C=101-285, D=287-373, G=101-254"/>
</dbReference>
<dbReference type="PDB" id="6KMV">
    <property type="method" value="X-ray"/>
    <property type="resolution" value="3.35 A"/>
    <property type="chains" value="A=118-278, B/V=101-267, E/F/Z/d=101-266, I/M/N/Q/Y=102-266, J=118-266, R/c=118-267, U=101-265, g/h/i/j/k/l/m/n/o/p/q/r/t/u/v=286-373, s=287-373"/>
</dbReference>
<dbReference type="PDB" id="6KN1">
    <property type="method" value="X-ray"/>
    <property type="resolution" value="1.90 A"/>
    <property type="chains" value="A=102-265, B=287-373, C=110-264, D=286-373"/>
</dbReference>
<dbReference type="PDB" id="6NS7">
    <property type="method" value="X-ray"/>
    <property type="resolution" value="2.40 A"/>
    <property type="chains" value="A/B/C/D=92-373"/>
</dbReference>
<dbReference type="PDBsum" id="6KMT"/>
<dbReference type="PDBsum" id="6KMU"/>
<dbReference type="PDBsum" id="6KMV"/>
<dbReference type="PDBsum" id="6KN1"/>
<dbReference type="PDBsum" id="6NS7"/>
<dbReference type="SMR" id="P70343"/>
<dbReference type="DIP" id="DIP-61776N"/>
<dbReference type="FunCoup" id="P70343">
    <property type="interactions" value="185"/>
</dbReference>
<dbReference type="IntAct" id="P70343">
    <property type="interactions" value="2"/>
</dbReference>
<dbReference type="STRING" id="10090.ENSMUSP00000027012"/>
<dbReference type="BindingDB" id="P70343"/>
<dbReference type="ChEMBL" id="CHEMBL1075276"/>
<dbReference type="MEROPS" id="C14.012"/>
<dbReference type="iPTMnet" id="P70343"/>
<dbReference type="PhosphoSitePlus" id="P70343"/>
<dbReference type="PaxDb" id="10090-ENSMUSP00000027012"/>
<dbReference type="ProteomicsDB" id="265438">
    <molecule id="P70343-1"/>
</dbReference>
<dbReference type="ProteomicsDB" id="265439">
    <molecule id="P70343-2"/>
</dbReference>
<dbReference type="DNASU" id="12363"/>
<dbReference type="Ensembl" id="ENSMUST00000027012.14">
    <molecule id="P70343-1"/>
    <property type="protein sequence ID" value="ENSMUSP00000027012.8"/>
    <property type="gene ID" value="ENSMUSG00000033538.14"/>
</dbReference>
<dbReference type="Ensembl" id="ENSMUST00000160064.8">
    <molecule id="P70343-2"/>
    <property type="protein sequence ID" value="ENSMUSP00000124249.2"/>
    <property type="gene ID" value="ENSMUSG00000033538.14"/>
</dbReference>
<dbReference type="GeneID" id="12363"/>
<dbReference type="KEGG" id="mmu:12363"/>
<dbReference type="UCSC" id="uc009obt.3">
    <molecule id="P70343-1"/>
    <property type="organism name" value="mouse"/>
</dbReference>
<dbReference type="AGR" id="MGI:107700"/>
<dbReference type="CTD" id="837"/>
<dbReference type="MGI" id="MGI:107700">
    <property type="gene designation" value="Casp4"/>
</dbReference>
<dbReference type="VEuPathDB" id="HostDB:ENSMUSG00000033538"/>
<dbReference type="eggNOG" id="KOG3573">
    <property type="taxonomic scope" value="Eukaryota"/>
</dbReference>
<dbReference type="GeneTree" id="ENSGT00940000162428"/>
<dbReference type="HOGENOM" id="CLU_036904_0_1_1"/>
<dbReference type="InParanoid" id="P70343"/>
<dbReference type="OMA" id="HGICGTL"/>
<dbReference type="OrthoDB" id="6097640at2759"/>
<dbReference type="PhylomeDB" id="P70343"/>
<dbReference type="TreeFam" id="TF102023"/>
<dbReference type="BRENDA" id="3.4.22.57">
    <property type="organism ID" value="3474"/>
</dbReference>
<dbReference type="BRENDA" id="3.4.22.64">
    <property type="organism ID" value="3474"/>
</dbReference>
<dbReference type="Reactome" id="R-MMU-168638">
    <property type="pathway name" value="NOD1/2 Signaling Pathway"/>
</dbReference>
<dbReference type="Reactome" id="R-MMU-5620971">
    <property type="pathway name" value="Pyroptosis"/>
</dbReference>
<dbReference type="BioGRID-ORCS" id="12363">
    <property type="hits" value="3 hits in 63 CRISPR screens"/>
</dbReference>
<dbReference type="ChiTaRS" id="Casp4">
    <property type="organism name" value="mouse"/>
</dbReference>
<dbReference type="PRO" id="PR:P70343"/>
<dbReference type="Proteomes" id="UP000000589">
    <property type="component" value="Chromosome 9"/>
</dbReference>
<dbReference type="RNAct" id="P70343">
    <property type="molecule type" value="protein"/>
</dbReference>
<dbReference type="Bgee" id="ENSMUSG00000033538">
    <property type="expression patterns" value="Expressed in granulocyte and 105 other cell types or tissues"/>
</dbReference>
<dbReference type="ExpressionAtlas" id="P70343">
    <property type="expression patterns" value="baseline and differential"/>
</dbReference>
<dbReference type="GO" id="GO:0061702">
    <property type="term" value="C:canonical inflammasome complex"/>
    <property type="evidence" value="ECO:0007669"/>
    <property type="project" value="UniProtKB-SubCell"/>
</dbReference>
<dbReference type="GO" id="GO:0005737">
    <property type="term" value="C:cytoplasm"/>
    <property type="evidence" value="ECO:0000314"/>
    <property type="project" value="UniProt"/>
</dbReference>
<dbReference type="GO" id="GO:0005829">
    <property type="term" value="C:cytosol"/>
    <property type="evidence" value="ECO:0000314"/>
    <property type="project" value="UniProt"/>
</dbReference>
<dbReference type="GO" id="GO:0005789">
    <property type="term" value="C:endoplasmic reticulum membrane"/>
    <property type="evidence" value="ECO:0007669"/>
    <property type="project" value="UniProtKB-SubCell"/>
</dbReference>
<dbReference type="GO" id="GO:0005576">
    <property type="term" value="C:extracellular region"/>
    <property type="evidence" value="ECO:0007669"/>
    <property type="project" value="UniProtKB-SubCell"/>
</dbReference>
<dbReference type="GO" id="GO:0005739">
    <property type="term" value="C:mitochondrion"/>
    <property type="evidence" value="ECO:0007669"/>
    <property type="project" value="UniProtKB-SubCell"/>
</dbReference>
<dbReference type="GO" id="GO:0160074">
    <property type="term" value="C:non-canonical inflammasome complex"/>
    <property type="evidence" value="ECO:0000314"/>
    <property type="project" value="UniProtKB"/>
</dbReference>
<dbReference type="GO" id="GO:0004197">
    <property type="term" value="F:cysteine-type endopeptidase activity"/>
    <property type="evidence" value="ECO:0000314"/>
    <property type="project" value="UniProtKB"/>
</dbReference>
<dbReference type="GO" id="GO:0008289">
    <property type="term" value="F:lipid binding"/>
    <property type="evidence" value="ECO:0000314"/>
    <property type="project" value="UniProt"/>
</dbReference>
<dbReference type="GO" id="GO:0001530">
    <property type="term" value="F:lipopolysaccharide binding"/>
    <property type="evidence" value="ECO:0000314"/>
    <property type="project" value="UniProtKB"/>
</dbReference>
<dbReference type="GO" id="GO:0007015">
    <property type="term" value="P:actin filament organization"/>
    <property type="evidence" value="ECO:0000304"/>
    <property type="project" value="UniProtKB"/>
</dbReference>
<dbReference type="GO" id="GO:0042742">
    <property type="term" value="P:defense response to bacterium"/>
    <property type="evidence" value="ECO:0000314"/>
    <property type="project" value="UniProtKB"/>
</dbReference>
<dbReference type="GO" id="GO:0050830">
    <property type="term" value="P:defense response to Gram-positive bacterium"/>
    <property type="evidence" value="ECO:0000314"/>
    <property type="project" value="UniProtKB"/>
</dbReference>
<dbReference type="GO" id="GO:0032497">
    <property type="term" value="P:detection of lipopolysaccharide"/>
    <property type="evidence" value="ECO:0000314"/>
    <property type="project" value="UniProtKB"/>
</dbReference>
<dbReference type="GO" id="GO:0035234">
    <property type="term" value="P:ectopic germ cell programmed cell death"/>
    <property type="evidence" value="ECO:0000315"/>
    <property type="project" value="MGI"/>
</dbReference>
<dbReference type="GO" id="GO:0045087">
    <property type="term" value="P:innate immune response"/>
    <property type="evidence" value="ECO:0007669"/>
    <property type="project" value="UniProtKB-KW"/>
</dbReference>
<dbReference type="GO" id="GO:0160075">
    <property type="term" value="P:non-canonical inflammasome complex assembly"/>
    <property type="evidence" value="ECO:0000314"/>
    <property type="project" value="UniProtKB"/>
</dbReference>
<dbReference type="GO" id="GO:0050729">
    <property type="term" value="P:positive regulation of inflammatory response"/>
    <property type="evidence" value="ECO:0000314"/>
    <property type="project" value="UniProtKB"/>
</dbReference>
<dbReference type="GO" id="GO:0032731">
    <property type="term" value="P:positive regulation of interleukin-1 beta production"/>
    <property type="evidence" value="ECO:0000316"/>
    <property type="project" value="MGI"/>
</dbReference>
<dbReference type="GO" id="GO:2000494">
    <property type="term" value="P:positive regulation of interleukin-18-mediated signaling pathway"/>
    <property type="evidence" value="ECO:0000314"/>
    <property type="project" value="UniProtKB"/>
</dbReference>
<dbReference type="GO" id="GO:0060907">
    <property type="term" value="P:positive regulation of macrophage cytokine production"/>
    <property type="evidence" value="ECO:0000316"/>
    <property type="project" value="MGI"/>
</dbReference>
<dbReference type="GO" id="GO:1900227">
    <property type="term" value="P:positive regulation of NLRP3 inflammasome complex assembly"/>
    <property type="evidence" value="ECO:0000314"/>
    <property type="project" value="UniProtKB"/>
</dbReference>
<dbReference type="GO" id="GO:0016540">
    <property type="term" value="P:protein autoprocessing"/>
    <property type="evidence" value="ECO:0000314"/>
    <property type="project" value="UniProtKB"/>
</dbReference>
<dbReference type="GO" id="GO:0051604">
    <property type="term" value="P:protein maturation"/>
    <property type="evidence" value="ECO:0000314"/>
    <property type="project" value="UniProt"/>
</dbReference>
<dbReference type="GO" id="GO:0141201">
    <property type="term" value="P:pyroptotic cell death"/>
    <property type="evidence" value="ECO:0000314"/>
    <property type="project" value="UniProtKB"/>
</dbReference>
<dbReference type="GO" id="GO:0070269">
    <property type="term" value="P:pyroptotic inflammatory response"/>
    <property type="evidence" value="ECO:0000314"/>
    <property type="project" value="UniProtKB"/>
</dbReference>
<dbReference type="GO" id="GO:0042981">
    <property type="term" value="P:regulation of apoptotic process"/>
    <property type="evidence" value="ECO:0007669"/>
    <property type="project" value="InterPro"/>
</dbReference>
<dbReference type="GO" id="GO:0050727">
    <property type="term" value="P:regulation of inflammatory response"/>
    <property type="evidence" value="ECO:0000314"/>
    <property type="project" value="UniProtKB"/>
</dbReference>
<dbReference type="CDD" id="cd08325">
    <property type="entry name" value="CARD_CASP1-like"/>
    <property type="match status" value="1"/>
</dbReference>
<dbReference type="CDD" id="cd00032">
    <property type="entry name" value="CASc"/>
    <property type="match status" value="1"/>
</dbReference>
<dbReference type="FunFam" id="3.30.70.1470:FF:000003">
    <property type="entry name" value="Caspase-1"/>
    <property type="match status" value="1"/>
</dbReference>
<dbReference type="FunFam" id="3.40.50.1460:FF:000007">
    <property type="entry name" value="Caspase-1"/>
    <property type="match status" value="1"/>
</dbReference>
<dbReference type="Gene3D" id="3.40.50.1460">
    <property type="match status" value="1"/>
</dbReference>
<dbReference type="Gene3D" id="3.30.70.1470">
    <property type="entry name" value="Caspase-like"/>
    <property type="match status" value="1"/>
</dbReference>
<dbReference type="Gene3D" id="1.10.533.10">
    <property type="entry name" value="Death Domain, Fas"/>
    <property type="match status" value="1"/>
</dbReference>
<dbReference type="InterPro" id="IPR001315">
    <property type="entry name" value="CARD"/>
</dbReference>
<dbReference type="InterPro" id="IPR029030">
    <property type="entry name" value="Caspase-like_dom_sf"/>
</dbReference>
<dbReference type="InterPro" id="IPR033139">
    <property type="entry name" value="Caspase_cys_AS"/>
</dbReference>
<dbReference type="InterPro" id="IPR016129">
    <property type="entry name" value="Caspase_his_AS"/>
</dbReference>
<dbReference type="InterPro" id="IPR011029">
    <property type="entry name" value="DEATH-like_dom_sf"/>
</dbReference>
<dbReference type="InterPro" id="IPR002398">
    <property type="entry name" value="Pept_C14"/>
</dbReference>
<dbReference type="InterPro" id="IPR011600">
    <property type="entry name" value="Pept_C14_caspase"/>
</dbReference>
<dbReference type="InterPro" id="IPR002138">
    <property type="entry name" value="Pept_C14_p10"/>
</dbReference>
<dbReference type="InterPro" id="IPR001309">
    <property type="entry name" value="Pept_C14_p20"/>
</dbReference>
<dbReference type="InterPro" id="IPR015917">
    <property type="entry name" value="Pept_C14A"/>
</dbReference>
<dbReference type="PANTHER" id="PTHR47901">
    <property type="entry name" value="CASPASE RECRUITMENT DOMAIN-CONTAINING PROTEIN 18"/>
    <property type="match status" value="1"/>
</dbReference>
<dbReference type="PANTHER" id="PTHR47901:SF3">
    <property type="entry name" value="CASPASE-1"/>
    <property type="match status" value="1"/>
</dbReference>
<dbReference type="Pfam" id="PF00619">
    <property type="entry name" value="CARD"/>
    <property type="match status" value="1"/>
</dbReference>
<dbReference type="Pfam" id="PF00656">
    <property type="entry name" value="Peptidase_C14"/>
    <property type="match status" value="1"/>
</dbReference>
<dbReference type="PIRSF" id="PIRSF038001">
    <property type="entry name" value="Caspase_ICE"/>
    <property type="match status" value="1"/>
</dbReference>
<dbReference type="PRINTS" id="PR00376">
    <property type="entry name" value="IL1BCENZYME"/>
</dbReference>
<dbReference type="SMART" id="SM00114">
    <property type="entry name" value="CARD"/>
    <property type="match status" value="1"/>
</dbReference>
<dbReference type="SMART" id="SM00115">
    <property type="entry name" value="CASc"/>
    <property type="match status" value="1"/>
</dbReference>
<dbReference type="SUPFAM" id="SSF52129">
    <property type="entry name" value="Caspase-like"/>
    <property type="match status" value="1"/>
</dbReference>
<dbReference type="SUPFAM" id="SSF47986">
    <property type="entry name" value="DEATH domain"/>
    <property type="match status" value="1"/>
</dbReference>
<dbReference type="PROSITE" id="PS50209">
    <property type="entry name" value="CARD"/>
    <property type="match status" value="1"/>
</dbReference>
<dbReference type="PROSITE" id="PS01122">
    <property type="entry name" value="CASPASE_CYS"/>
    <property type="match status" value="1"/>
</dbReference>
<dbReference type="PROSITE" id="PS01121">
    <property type="entry name" value="CASPASE_HIS"/>
    <property type="match status" value="1"/>
</dbReference>
<dbReference type="PROSITE" id="PS50207">
    <property type="entry name" value="CASPASE_P10"/>
    <property type="match status" value="1"/>
</dbReference>
<dbReference type="PROSITE" id="PS50208">
    <property type="entry name" value="CASPASE_P20"/>
    <property type="match status" value="1"/>
</dbReference>
<comment type="function">
    <text evidence="2 7 8 9 10 11 12 13 14 15 17 18 20 21 22 23 24 25 26 27 28 29 30 31">Inflammatory caspase that acts as the effector of the non-canonical inflammasome by mediating lipopolysaccharide (LPS)-induced pyroptosis (PubMed:22002608, PubMed:23348507, PubMed:23887873, PubMed:24031018, PubMed:25119034, PubMed:30135078, PubMed:37001519, PubMed:38632402). Also indirectly activates the NLRP3 and NLRP6 inflammasomes (PubMed:26320999, PubMed:30392956, PubMed:37001519). Acts as a thiol protease that cleaves a tetrapeptide after an Asp residue at position P1: catalyzes cleavage of CGAS and GSDMD (PubMed:26375003, PubMed:28314590, PubMed:30392956, PubMed:38632402). In contrast to its human ortholog, does not cleave IL18 (PubMed:37993712, PubMed:37993714). Effector of the non-canonical inflammasome independently of NLRP3 inflammasome and CASP1: the non-canonical inflammasome promotes pyroptosis through GSDMD cleavage without involving secretion of cytokine IL1B and IL18 (PubMed:22002608, PubMed:22895188, PubMed:23348507, PubMed:23887873, PubMed:24031018, PubMed:26320999, PubMed:26375003, PubMed:30135078, PubMed:30589883). In the non-canonical inflammasome, CASP4/CASP11 is activated by direct binding to the lipid A moiety of LPS without the need of an upstream sensor (PubMed:22002608, PubMed:23348507, PubMed:25119034, PubMed:37001519, PubMed:38632402). LPS-binding promotes CASP4/CASP11 activation and CASP4/CASP11-mediated cleavage of GSDMD, followed by pyroptosis of infected cells and their extrusion into the gut lumen (PubMed:22002608, PubMed:23348507, PubMed:25119034, PubMed:38632402). Also indirectly promotes secretion of mature cytokines (IL1A, IL18 and HMGB1) downstream of GSDMD-mediated pyroptosis via activation of the NLRP3 and NLRP6 inflammasomes (By similarity). Involved in NLRP3-dependent CASP1 activation and IL1B and IL18 secretion in response to non-canonical activators, such as UVB radiation or cholera enterotoxin (PubMed:26320999). Involved in NLRP6 inflammasome-dependent activation in response to lipoteichoic acid (LTA), a cell-wall component of Gram-positive bacteria, which leads to CASP1 activation and IL1B and IL18 secretion (PubMed:30392956). Involved in LPS-induced IL6 secretion; this activity may not require caspase enzymatic activity (By similarity). The non-canonical inflammasome is required for innate immunity to cytosolic, but not vacuolar, bacteria (PubMed:23348507). Plays a crucial role in the restriction of S.typhimurium replication in colonic epithelial cells during infection (PubMed:25121752, PubMed:26375003, PubMed:34671164). Activation of the non-canonical inflammasome in brain endothelial cells can lead to excessive pyroptosis, leading to blood-brain barrier breakdown (PubMed:38632402). Pyroptosis limits bacterial replication, while cytokine secretion promotes the recruitment and activation of immune cells and triggers mucosal inflammation (PubMed:25121752). May also act as an activator of adaptive immunity in dendritic cells, following activation by oxidized phospholipid 1-palmitoyl-2-arachidonoyl- sn-glycero-3-phosphorylcholine, an oxidized phospholipid (oxPAPC) (PubMed:27103670). Cleavage of GSDMD is not strictly dependent on the consensus cleavage site but depends on an exosite interface on CASP4/CASP11 that recognizes and binds the Gasdermin-D, C-terminal (GSDMD-CT) part (PubMed:32109412, PubMed:32554464). In contrast, it does not directly process IL1B (PubMed:8702803, PubMed:9038361). During non-canonical inflammasome activation, cuts CGAS and may play a role in the regulation of antiviral innate immune activation (PubMed:28314590).</text>
</comment>
<comment type="catalytic activity">
    <reaction evidence="20">
        <text>Strict requirement for Asp at the P1 position and has a preferred cleavage sequence of (Ile/Leu/Val/Phe)-Gly-His-Asp-|-.</text>
        <dbReference type="EC" id="3.4.22.64"/>
    </reaction>
</comment>
<comment type="activity regulation">
    <text evidence="7 9 10 11 12 17 19">Activated by homooligomerization induced by direct binding to cytosolic LPS, in a TLR4-independent manner (PubMed:22002608, PubMed:23348507, PubMed:23887873, PubMed:24031018, PubMed:25119034). In addition to LPS, CASP4/CASP11 may also be activated by oxidized phospholipid 1-palmitoyl-2-arachidonoyl- sn-glycero-3-phosphorylcholine, an oxidized phospholipid (oxPAPC), in dendritic cells, promoting adaptive immunity (PubMed:27103670). The role of oxPAPC is however unclear and another report suggests that oxPAPC competes with LPS-binding and inhibits the non-canonical inflammasome in macrophages (PubMed:29520027).</text>
</comment>
<comment type="subunit">
    <text evidence="2 12 23">Heterotetramer that consists of two anti-parallel arranged heterodimers, each one formed by a 20 kDa (Caspase-4 subunit p20) and a 10 kDa (Caspase-4 subunit p10) subunit (PubMed:32109412). Upon direct LPS-binding, forms large homooligomers, resulting in its activation (PubMed:25119034). These oligomers are often referred to as 'non-canonical inflammasomes' (PubMed:25119034). In its precursor form, interacts with TMEM214; this interaction is required for association with the endoplasmic reticulum membrane (By similarity). Interacts with CASP1 (By similarity). Interacts with NOD2 (By similarity). Interacts with Serpinb1a, Serpinb1b and Serpinb1c; these interactions regulate CASP4 activity (By similarity).</text>
</comment>
<comment type="subunit">
    <molecule>Caspase-4 subunit p20</molecule>
    <text evidence="23">Heterotetramer that consists of two anti-parallel arranged heterodimers, each one formed by a 20 kDa (Caspase-4 subunit p20) and a 10 kDa (Caspase-4 subunit p10) subunit.</text>
</comment>
<comment type="subunit">
    <molecule>Caspase-4 subunit p10</molecule>
    <text evidence="23">Heterotetramer that consists of two anti-parallel arranged heterodimers, each one formed by a 20 kDa (Caspase-4 subunit p20) and a 10 kDa (Caspase-4 subunit p10) subunit.</text>
</comment>
<comment type="subcellular location">
    <subcellularLocation>
        <location evidence="2">Cytoplasm</location>
        <location evidence="2">Cytosol</location>
    </subcellularLocation>
    <subcellularLocation>
        <location evidence="6">Cytoplasm</location>
    </subcellularLocation>
    <subcellularLocation>
        <location evidence="2">Endoplasmic reticulum membrane</location>
        <topology evidence="2">Peripheral membrane protein</topology>
        <orientation evidence="2">Cytoplasmic side</orientation>
    </subcellularLocation>
    <subcellularLocation>
        <location evidence="2">Mitochondrion</location>
    </subcellularLocation>
    <subcellularLocation>
        <location evidence="12">Inflammasome</location>
    </subcellularLocation>
    <subcellularLocation>
        <location evidence="2">Secreted</location>
    </subcellularLocation>
    <text evidence="2">Predominantly localizes to the endoplasmic reticulum (ER). Association with the ER membrane requires TMEM214. Released in the extracellular milieu by keratinocytes following UVB irradiation.</text>
</comment>
<comment type="alternative products">
    <event type="alternative splicing"/>
    <isoform>
        <id>P70343-1</id>
        <name>1</name>
        <sequence type="displayed"/>
    </isoform>
    <isoform>
        <id>P70343-2</id>
        <name>2</name>
        <sequence type="described" ref="VSP_058183 VSP_058184"/>
    </isoform>
</comment>
<comment type="tissue specificity">
    <text evidence="30 31">Widely expressed, including in thymus, lung and spleen (at protein level). Very low levels, if any, in the brain.</text>
</comment>
<comment type="induction">
    <text evidence="5 6 7 14 16 30">Up-regulated by LPS and E.coli (PubMed:10986288, PubMed:22002608, PubMed:26375259, PubMed:8702803). In LPS-induced lung inflammation, markedly up-regulated after 6 hours of treatment and decreases at 24 hours. The induction is dependent upon DDIT3/CHOP-mediated ER stress (at protein level) (PubMed:16670335). In the spleen and in bone marrow-derived macrophages, up-regulated by poly(I:C), a synthetic analog of double-stranded RNA (at protein level) (PubMed:26320999, PubMed:26375259). Also induced by IFNG and interferon-alpha. Up-regulated by R848, a TLR7 synthetic activator, and Pam3CysK4, a synthetic activator of TLR1/TLR2 (PubMed:26375259).</text>
</comment>
<comment type="domain">
    <text evidence="12">The CARD domain mediates LPS recognition and homooligomerization.</text>
</comment>
<comment type="PTM">
    <text evidence="7 13 20 21 23">In response to activation signals, undergoes autoproteolytic cleavage and activation.</text>
</comment>
<comment type="PTM">
    <text evidence="25">(Microbial infection) ADP-riboxanation by S.flexneri OspC3 blocks CASP4 autoprocessing, preventing CASP4 activation and ability to recognize and cleave GSDMD, thereby thwarting the inflammasome/pyroptosis-mediated defense.</text>
</comment>
<comment type="polymorphism">
    <text evidence="7">A variant of this gene has been observed in several 129 substrains, including 129/SvJ, 129S1/Sv, 129P3/J and 129S6/SvEvTac. This variant displays a 5-bp deletion encompassing the exon 7 splice acceptor junction. As a result, exon 7 is spliced out. Joining of exon 6 to exon 8 creates a frameshift after Pro-304 and a stop codon occurs after 5 aberrant amino acids. The mRNA may be the target of nonsense-mediated mRNA decay. It is detected only at low levels, while the corresponding protein is not detected at all in any of the 129 substrains tested.</text>
</comment>
<comment type="disruption phenotype">
    <text evidence="7 13 14 16 26 29">Mutant animals are largely resistant to lipopolysaccharide (LPS)-induced lethal septic shock (PubMed:22002608, PubMed:26375259, PubMed:37001519). However, they are susceptible to Burkholderia thailandensis infection, even at low bacterial doses (PubMed:26320999). During intestinal Salmonella Typhimurium infection, mutant animals display higher pathogen loads in their cecal tissues and lumen and lower levels of IL18 in cecal explants, associated with a significant reduction in cecal inflammation (PubMed:25121752). Bone-marrow-derived macrophages from knockout mice respond normally, in terms of IL1B secretion, to canonical inflammasome activators, such as ATP, monosodium urate, poly(dA:dT) double-stranded DNA, Francisella tularensis, flagellin or Pseudomonas aeruginosa, but fail to secrete IL1B in response to cholera enterotoxin subunit B or LPS (PubMed:22002608, PubMed:37001519). They also do not respond to live E.coli, C.rodentium and V.cholerae, with or without LPS priming (PubMed:22002608). Increased resistance of the blood-brain barrier following infection, due to decreased pyroptosis of endothelial cells (PubMed:38632402).</text>
</comment>
<comment type="miscellaneous">
    <molecule>Isoform 2</molecule>
    <text evidence="35">May be produced at very low levels due to a premature stop codon in the mRNA, leading to nonsense-mediated mRNA decay.</text>
</comment>
<comment type="similarity">
    <text evidence="35">Belongs to the peptidase C14A family.</text>
</comment>
<evidence type="ECO:0000250" key="1">
    <source>
        <dbReference type="UniProtKB" id="P29466"/>
    </source>
</evidence>
<evidence type="ECO:0000250" key="2">
    <source>
        <dbReference type="UniProtKB" id="P49662"/>
    </source>
</evidence>
<evidence type="ECO:0000255" key="3"/>
<evidence type="ECO:0000255" key="4">
    <source>
        <dbReference type="PROSITE-ProRule" id="PRU00046"/>
    </source>
</evidence>
<evidence type="ECO:0000269" key="5">
    <source>
    </source>
</evidence>
<evidence type="ECO:0000269" key="6">
    <source>
    </source>
</evidence>
<evidence type="ECO:0000269" key="7">
    <source>
    </source>
</evidence>
<evidence type="ECO:0000269" key="8">
    <source>
    </source>
</evidence>
<evidence type="ECO:0000269" key="9">
    <source>
    </source>
</evidence>
<evidence type="ECO:0000269" key="10">
    <source>
    </source>
</evidence>
<evidence type="ECO:0000269" key="11">
    <source>
    </source>
</evidence>
<evidence type="ECO:0000269" key="12">
    <source>
    </source>
</evidence>
<evidence type="ECO:0000269" key="13">
    <source>
    </source>
</evidence>
<evidence type="ECO:0000269" key="14">
    <source>
    </source>
</evidence>
<evidence type="ECO:0000269" key="15">
    <source>
    </source>
</evidence>
<evidence type="ECO:0000269" key="16">
    <source>
    </source>
</evidence>
<evidence type="ECO:0000269" key="17">
    <source>
    </source>
</evidence>
<evidence type="ECO:0000269" key="18">
    <source>
    </source>
</evidence>
<evidence type="ECO:0000269" key="19">
    <source>
    </source>
</evidence>
<evidence type="ECO:0000269" key="20">
    <source>
    </source>
</evidence>
<evidence type="ECO:0000269" key="21">
    <source>
    </source>
</evidence>
<evidence type="ECO:0000269" key="22">
    <source>
    </source>
</evidence>
<evidence type="ECO:0000269" key="23">
    <source>
    </source>
</evidence>
<evidence type="ECO:0000269" key="24">
    <source>
    </source>
</evidence>
<evidence type="ECO:0000269" key="25">
    <source>
    </source>
</evidence>
<evidence type="ECO:0000269" key="26">
    <source>
    </source>
</evidence>
<evidence type="ECO:0000269" key="27">
    <source>
    </source>
</evidence>
<evidence type="ECO:0000269" key="28">
    <source>
    </source>
</evidence>
<evidence type="ECO:0000269" key="29">
    <source>
    </source>
</evidence>
<evidence type="ECO:0000269" key="30">
    <source>
    </source>
</evidence>
<evidence type="ECO:0000269" key="31">
    <source>
    </source>
</evidence>
<evidence type="ECO:0000303" key="32">
    <source>
    </source>
</evidence>
<evidence type="ECO:0000303" key="33">
    <source>
    </source>
</evidence>
<evidence type="ECO:0000303" key="34">
    <source ref="3"/>
</evidence>
<evidence type="ECO:0000305" key="35"/>
<evidence type="ECO:0000305" key="36">
    <source>
    </source>
</evidence>
<evidence type="ECO:0000305" key="37">
    <source>
    </source>
</evidence>
<evidence type="ECO:0000312" key="38">
    <source>
        <dbReference type="MGI" id="MGI:107700"/>
    </source>
</evidence>
<evidence type="ECO:0007744" key="39">
    <source>
        <dbReference type="PDB" id="6KMT"/>
    </source>
</evidence>
<evidence type="ECO:0007744" key="40">
    <source>
        <dbReference type="PDB" id="6KMU"/>
    </source>
</evidence>
<evidence type="ECO:0007744" key="41">
    <source>
        <dbReference type="PDB" id="6KMV"/>
    </source>
</evidence>
<evidence type="ECO:0007744" key="42">
    <source>
        <dbReference type="PDB" id="6KN1"/>
    </source>
</evidence>
<evidence type="ECO:0007829" key="43">
    <source>
        <dbReference type="PDB" id="6KMT"/>
    </source>
</evidence>
<evidence type="ECO:0007829" key="44">
    <source>
        <dbReference type="PDB" id="6KMU"/>
    </source>
</evidence>
<evidence type="ECO:0007829" key="45">
    <source>
        <dbReference type="PDB" id="6KN1"/>
    </source>
</evidence>
<sequence length="373" mass="42742">MAENKHPDKPLKVLEQLGKEVLTEYLEKLVQSNVLKLKEEDKQKFNNAERSDKRWVFVDAMKKKHSKVGEMLLQTFFSVDPGSHHGEANLEMEEPEESLNTLKLCSPEEFTRLCREKTQEIYPIKEANGRTRKALIICNTEFKHLSLRYGANFDIIGMKGLLEDLGYDVVVKEELTAEGMESEMKDFAALSEHQTSDSTFLVLMSHGTLHGICGTMHSEKTPDVLQYDTIYQIFNNCHCPGLRDKPKVIIVQACRGGNSGEMWIRESSKPQLCRGVDLPRNMEADAVKLSHVEKDFIAFYSTTPHHLSYRDKTGGSYFITRLISCFRKHACSCHLFDIFLKVQQSFEKASIHSQMPTIDRATLTRYFYLFPGN</sequence>
<keyword id="KW-0002">3D-structure</keyword>
<keyword id="KW-0025">Alternative splicing</keyword>
<keyword id="KW-0963">Cytoplasm</keyword>
<keyword id="KW-0256">Endoplasmic reticulum</keyword>
<keyword id="KW-0378">Hydrolase</keyword>
<keyword id="KW-0391">Immunity</keyword>
<keyword id="KW-1271">Inflammasome</keyword>
<keyword id="KW-0395">Inflammatory response</keyword>
<keyword id="KW-0399">Innate immunity</keyword>
<keyword id="KW-0472">Membrane</keyword>
<keyword id="KW-0496">Mitochondrion</keyword>
<keyword id="KW-1210">Necrosis</keyword>
<keyword id="KW-0597">Phosphoprotein</keyword>
<keyword id="KW-0645">Protease</keyword>
<keyword id="KW-1185">Reference proteome</keyword>
<keyword id="KW-0964">Secreted</keyword>
<keyword id="KW-0788">Thiol protease</keyword>
<keyword id="KW-0865">Zymogen</keyword>
<organism>
    <name type="scientific">Mus musculus</name>
    <name type="common">Mouse</name>
    <dbReference type="NCBI Taxonomy" id="10090"/>
    <lineage>
        <taxon>Eukaryota</taxon>
        <taxon>Metazoa</taxon>
        <taxon>Chordata</taxon>
        <taxon>Craniata</taxon>
        <taxon>Vertebrata</taxon>
        <taxon>Euteleostomi</taxon>
        <taxon>Mammalia</taxon>
        <taxon>Eutheria</taxon>
        <taxon>Euarchontoglires</taxon>
        <taxon>Glires</taxon>
        <taxon>Rodentia</taxon>
        <taxon>Myomorpha</taxon>
        <taxon>Muroidea</taxon>
        <taxon>Muridae</taxon>
        <taxon>Murinae</taxon>
        <taxon>Mus</taxon>
        <taxon>Mus</taxon>
    </lineage>
</organism>
<protein>
    <recommendedName>
        <fullName evidence="35">Caspase-4</fullName>
        <shortName>CASP-4</shortName>
        <ecNumber evidence="20">3.4.22.64</ecNumber>
    </recommendedName>
    <alternativeName>
        <fullName evidence="34">Caspase-11</fullName>
        <shortName evidence="34">CASP-11</shortName>
    </alternativeName>
    <alternativeName>
        <fullName evidence="33">Protease ICH-3</fullName>
    </alternativeName>
    <component>
        <recommendedName>
            <fullName evidence="37">Caspase-4 subunit p10</fullName>
        </recommendedName>
    </component>
    <component>
        <recommendedName>
            <fullName evidence="37">Caspase-4 subunit p20</fullName>
        </recommendedName>
    </component>
</protein>
<accession>P70343</accession>
<accession>C6L648</accession>
<accession>O08735</accession>
<accession>Q3TAF3</accession>
<accession>Q6P8H1</accession>
<reference key="1">
    <citation type="journal article" date="1996" name="J. Biol. Chem.">
        <title>Identification and characterization of Ich-3, a member of the interleukin-1beta converting enzyme (ICE)/Ced-3 family and an upstream regulator of ICE.</title>
        <authorList>
            <person name="Wang S."/>
            <person name="Miura M."/>
            <person name="Jung Y.-K."/>
            <person name="Zhu H."/>
            <person name="Gagliardini V."/>
            <person name="Shi L."/>
            <person name="Greenberg A.H."/>
            <person name="Yuan J."/>
        </authorList>
    </citation>
    <scope>NUCLEOTIDE SEQUENCE [MRNA] (ISOFORM 1)</scope>
    <scope>FUNCTION</scope>
    <scope>INDUCTION BY LPS</scope>
    <scope>TISSUE SPECIFICITY</scope>
    <source>
        <strain>C57BL/6 X CBA</strain>
        <tissue>Thymus</tissue>
    </source>
</reference>
<reference key="2">
    <citation type="journal article" date="1997" name="FEBS Lett.">
        <title>Characterization of seven murine caspase family members.</title>
        <authorList>
            <person name="van de Craen M."/>
            <person name="Vandenabeele P."/>
            <person name="Declercq W."/>
            <person name="van den Brande I."/>
            <person name="van Loo G."/>
            <person name="Molemans F."/>
            <person name="Schotte P."/>
            <person name="van Criekinge W."/>
            <person name="Beyaert R."/>
            <person name="Fiers W."/>
        </authorList>
    </citation>
    <scope>NUCLEOTIDE SEQUENCE [MRNA] (ISOFORM 1)</scope>
    <scope>FUNCTION</scope>
    <scope>TISSUE SPECIFICITY</scope>
    <source>
        <strain>C3H/An</strain>
        <tissue>Fibrosarcoma</tissue>
    </source>
</reference>
<reference key="3">
    <citation type="submission" date="2009-02" db="EMBL/GenBank/DDBJ databases">
        <title>ER stress-mediated caspase-11 induction is regulated with alternative splicing.</title>
        <authorList>
            <person name="Endo M."/>
            <person name="Nakayama Y."/>
            <person name="Mori M."/>
            <person name="Oike Y."/>
            <person name="Gotoh T."/>
        </authorList>
    </citation>
    <scope>NUCLEOTIDE SEQUENCE [MRNA] (ISOFORM 2)</scope>
    <source>
        <strain>C57BL/6J</strain>
    </source>
</reference>
<reference key="4">
    <citation type="journal article" date="2005" name="Science">
        <title>The transcriptional landscape of the mammalian genome.</title>
        <authorList>
            <person name="Carninci P."/>
            <person name="Kasukawa T."/>
            <person name="Katayama S."/>
            <person name="Gough J."/>
            <person name="Frith M.C."/>
            <person name="Maeda N."/>
            <person name="Oyama R."/>
            <person name="Ravasi T."/>
            <person name="Lenhard B."/>
            <person name="Wells C."/>
            <person name="Kodzius R."/>
            <person name="Shimokawa K."/>
            <person name="Bajic V.B."/>
            <person name="Brenner S.E."/>
            <person name="Batalov S."/>
            <person name="Forrest A.R."/>
            <person name="Zavolan M."/>
            <person name="Davis M.J."/>
            <person name="Wilming L.G."/>
            <person name="Aidinis V."/>
            <person name="Allen J.E."/>
            <person name="Ambesi-Impiombato A."/>
            <person name="Apweiler R."/>
            <person name="Aturaliya R.N."/>
            <person name="Bailey T.L."/>
            <person name="Bansal M."/>
            <person name="Baxter L."/>
            <person name="Beisel K.W."/>
            <person name="Bersano T."/>
            <person name="Bono H."/>
            <person name="Chalk A.M."/>
            <person name="Chiu K.P."/>
            <person name="Choudhary V."/>
            <person name="Christoffels A."/>
            <person name="Clutterbuck D.R."/>
            <person name="Crowe M.L."/>
            <person name="Dalla E."/>
            <person name="Dalrymple B.P."/>
            <person name="de Bono B."/>
            <person name="Della Gatta G."/>
            <person name="di Bernardo D."/>
            <person name="Down T."/>
            <person name="Engstrom P."/>
            <person name="Fagiolini M."/>
            <person name="Faulkner G."/>
            <person name="Fletcher C.F."/>
            <person name="Fukushima T."/>
            <person name="Furuno M."/>
            <person name="Futaki S."/>
            <person name="Gariboldi M."/>
            <person name="Georgii-Hemming P."/>
            <person name="Gingeras T.R."/>
            <person name="Gojobori T."/>
            <person name="Green R.E."/>
            <person name="Gustincich S."/>
            <person name="Harbers M."/>
            <person name="Hayashi Y."/>
            <person name="Hensch T.K."/>
            <person name="Hirokawa N."/>
            <person name="Hill D."/>
            <person name="Huminiecki L."/>
            <person name="Iacono M."/>
            <person name="Ikeo K."/>
            <person name="Iwama A."/>
            <person name="Ishikawa T."/>
            <person name="Jakt M."/>
            <person name="Kanapin A."/>
            <person name="Katoh M."/>
            <person name="Kawasawa Y."/>
            <person name="Kelso J."/>
            <person name="Kitamura H."/>
            <person name="Kitano H."/>
            <person name="Kollias G."/>
            <person name="Krishnan S.P."/>
            <person name="Kruger A."/>
            <person name="Kummerfeld S.K."/>
            <person name="Kurochkin I.V."/>
            <person name="Lareau L.F."/>
            <person name="Lazarevic D."/>
            <person name="Lipovich L."/>
            <person name="Liu J."/>
            <person name="Liuni S."/>
            <person name="McWilliam S."/>
            <person name="Madan Babu M."/>
            <person name="Madera M."/>
            <person name="Marchionni L."/>
            <person name="Matsuda H."/>
            <person name="Matsuzawa S."/>
            <person name="Miki H."/>
            <person name="Mignone F."/>
            <person name="Miyake S."/>
            <person name="Morris K."/>
            <person name="Mottagui-Tabar S."/>
            <person name="Mulder N."/>
            <person name="Nakano N."/>
            <person name="Nakauchi H."/>
            <person name="Ng P."/>
            <person name="Nilsson R."/>
            <person name="Nishiguchi S."/>
            <person name="Nishikawa S."/>
            <person name="Nori F."/>
            <person name="Ohara O."/>
            <person name="Okazaki Y."/>
            <person name="Orlando V."/>
            <person name="Pang K.C."/>
            <person name="Pavan W.J."/>
            <person name="Pavesi G."/>
            <person name="Pesole G."/>
            <person name="Petrovsky N."/>
            <person name="Piazza S."/>
            <person name="Reed J."/>
            <person name="Reid J.F."/>
            <person name="Ring B.Z."/>
            <person name="Ringwald M."/>
            <person name="Rost B."/>
            <person name="Ruan Y."/>
            <person name="Salzberg S.L."/>
            <person name="Sandelin A."/>
            <person name="Schneider C."/>
            <person name="Schoenbach C."/>
            <person name="Sekiguchi K."/>
            <person name="Semple C.A."/>
            <person name="Seno S."/>
            <person name="Sessa L."/>
            <person name="Sheng Y."/>
            <person name="Shibata Y."/>
            <person name="Shimada H."/>
            <person name="Shimada K."/>
            <person name="Silva D."/>
            <person name="Sinclair B."/>
            <person name="Sperling S."/>
            <person name="Stupka E."/>
            <person name="Sugiura K."/>
            <person name="Sultana R."/>
            <person name="Takenaka Y."/>
            <person name="Taki K."/>
            <person name="Tammoja K."/>
            <person name="Tan S.L."/>
            <person name="Tang S."/>
            <person name="Taylor M.S."/>
            <person name="Tegner J."/>
            <person name="Teichmann S.A."/>
            <person name="Ueda H.R."/>
            <person name="van Nimwegen E."/>
            <person name="Verardo R."/>
            <person name="Wei C.L."/>
            <person name="Yagi K."/>
            <person name="Yamanishi H."/>
            <person name="Zabarovsky E."/>
            <person name="Zhu S."/>
            <person name="Zimmer A."/>
            <person name="Hide W."/>
            <person name="Bult C."/>
            <person name="Grimmond S.M."/>
            <person name="Teasdale R.D."/>
            <person name="Liu E.T."/>
            <person name="Brusic V."/>
            <person name="Quackenbush J."/>
            <person name="Wahlestedt C."/>
            <person name="Mattick J.S."/>
            <person name="Hume D.A."/>
            <person name="Kai C."/>
            <person name="Sasaki D."/>
            <person name="Tomaru Y."/>
            <person name="Fukuda S."/>
            <person name="Kanamori-Katayama M."/>
            <person name="Suzuki M."/>
            <person name="Aoki J."/>
            <person name="Arakawa T."/>
            <person name="Iida J."/>
            <person name="Imamura K."/>
            <person name="Itoh M."/>
            <person name="Kato T."/>
            <person name="Kawaji H."/>
            <person name="Kawagashira N."/>
            <person name="Kawashima T."/>
            <person name="Kojima M."/>
            <person name="Kondo S."/>
            <person name="Konno H."/>
            <person name="Nakano K."/>
            <person name="Ninomiya N."/>
            <person name="Nishio T."/>
            <person name="Okada M."/>
            <person name="Plessy C."/>
            <person name="Shibata K."/>
            <person name="Shiraki T."/>
            <person name="Suzuki S."/>
            <person name="Tagami M."/>
            <person name="Waki K."/>
            <person name="Watahiki A."/>
            <person name="Okamura-Oho Y."/>
            <person name="Suzuki H."/>
            <person name="Kawai J."/>
            <person name="Hayashizaki Y."/>
        </authorList>
    </citation>
    <scope>NUCLEOTIDE SEQUENCE [LARGE SCALE MRNA] (ISOFORM 1)</scope>
    <source>
        <strain>C57BL/6J</strain>
        <strain>NOD</strain>
        <tissue>Bone marrow</tissue>
        <tissue>Spleen</tissue>
    </source>
</reference>
<reference key="5">
    <citation type="journal article" date="2009" name="PLoS Biol.">
        <title>Lineage-specific biology revealed by a finished genome assembly of the mouse.</title>
        <authorList>
            <person name="Church D.M."/>
            <person name="Goodstadt L."/>
            <person name="Hillier L.W."/>
            <person name="Zody M.C."/>
            <person name="Goldstein S."/>
            <person name="She X."/>
            <person name="Bult C.J."/>
            <person name="Agarwala R."/>
            <person name="Cherry J.L."/>
            <person name="DiCuccio M."/>
            <person name="Hlavina W."/>
            <person name="Kapustin Y."/>
            <person name="Meric P."/>
            <person name="Maglott D."/>
            <person name="Birtle Z."/>
            <person name="Marques A.C."/>
            <person name="Graves T."/>
            <person name="Zhou S."/>
            <person name="Teague B."/>
            <person name="Potamousis K."/>
            <person name="Churas C."/>
            <person name="Place M."/>
            <person name="Herschleb J."/>
            <person name="Runnheim R."/>
            <person name="Forrest D."/>
            <person name="Amos-Landgraf J."/>
            <person name="Schwartz D.C."/>
            <person name="Cheng Z."/>
            <person name="Lindblad-Toh K."/>
            <person name="Eichler E.E."/>
            <person name="Ponting C.P."/>
        </authorList>
    </citation>
    <scope>NUCLEOTIDE SEQUENCE [LARGE SCALE GENOMIC DNA]</scope>
    <source>
        <strain>C57BL/6J</strain>
    </source>
</reference>
<reference key="6">
    <citation type="submission" date="2005-07" db="EMBL/GenBank/DDBJ databases">
        <authorList>
            <person name="Mural R.J."/>
            <person name="Adams M.D."/>
            <person name="Myers E.W."/>
            <person name="Smith H.O."/>
            <person name="Venter J.C."/>
        </authorList>
    </citation>
    <scope>NUCLEOTIDE SEQUENCE [LARGE SCALE GENOMIC DNA]</scope>
</reference>
<reference key="7">
    <citation type="journal article" date="2004" name="Genome Res.">
        <title>The status, quality, and expansion of the NIH full-length cDNA project: the Mammalian Gene Collection (MGC).</title>
        <authorList>
            <consortium name="The MGC Project Team"/>
        </authorList>
    </citation>
    <scope>NUCLEOTIDE SEQUENCE [LARGE SCALE MRNA] (ISOFORM 1)</scope>
    <source>
        <tissue>Pituitary</tissue>
    </source>
</reference>
<reference key="8">
    <citation type="journal article" date="2000" name="J. Biol. Chem.">
        <title>Expression analysis of the human caspase-1 subfamily reveals specific regulation of the CASP5 gene by lipopolysaccharide and interferon-gamma.</title>
        <authorList>
            <person name="Lin X.Y."/>
            <person name="Choi M.S."/>
            <person name="Porter A.G."/>
        </authorList>
    </citation>
    <scope>INDUCTION BY LPS</scope>
</reference>
<reference key="9">
    <citation type="journal article" date="2006" name="J. Immunol.">
        <title>C/EBP homologous protein (CHOP) is crucial for the induction of caspase-11 and the pathogenesis of lipopolysaccharide-induced inflammation.</title>
        <authorList>
            <person name="Endo M."/>
            <person name="Mori M."/>
            <person name="Akira S."/>
            <person name="Gotoh T."/>
        </authorList>
    </citation>
    <scope>INDUCTION BY LPS AND ER STRESS</scope>
    <scope>SUBCELLULAR LOCATION</scope>
</reference>
<reference key="10">
    <citation type="journal article" date="2011" name="Nature">
        <title>Non-canonical inflammasome activation targets caspase-11.</title>
        <authorList>
            <person name="Kayagaki N."/>
            <person name="Warming S."/>
            <person name="Lamkanfi M."/>
            <person name="Vande Walle L."/>
            <person name="Louie S."/>
            <person name="Dong J."/>
            <person name="Newton K."/>
            <person name="Qu Y."/>
            <person name="Liu J."/>
            <person name="Heldens S."/>
            <person name="Zhang J."/>
            <person name="Lee W.P."/>
            <person name="Roose-Girma M."/>
            <person name="Dixit V.M."/>
        </authorList>
    </citation>
    <scope>FUNCTION</scope>
    <scope>ACTIVITY REGULATION</scope>
    <scope>DISRUPTION PHENOTYPE</scope>
    <scope>INDUCTION BY LPS AND LIVE E.COLI</scope>
    <scope>STRAIN-SPECIFIC VARIANT</scope>
    <scope>PROTEOLYTIC CLEAVAGE</scope>
    <scope>MUTAGENESIS OF CYS-254</scope>
</reference>
<reference key="11">
    <citation type="journal article" date="2012" name="Nature">
        <title>Caspase-11 increases susceptibility to Salmonella infection in the absence of caspase-1.</title>
        <authorList>
            <person name="Broz P."/>
            <person name="Ruby T."/>
            <person name="Belhocine K."/>
            <person name="Bouley D.M."/>
            <person name="Kayagaki N."/>
            <person name="Dixit V.M."/>
            <person name="Monack D.M."/>
        </authorList>
    </citation>
    <scope>FUNCTION</scope>
</reference>
<reference key="12">
    <citation type="journal article" date="2013" name="Science">
        <title>Caspase-11 protects against bacteria that escape the vacuole.</title>
        <authorList>
            <person name="Aachoui Y."/>
            <person name="Leaf I.A."/>
            <person name="Hagar J.A."/>
            <person name="Fontana M.F."/>
            <person name="Campos C.G."/>
            <person name="Zak D.E."/>
            <person name="Tan M.H."/>
            <person name="Cotter P.A."/>
            <person name="Vance R.E."/>
            <person name="Aderem A."/>
            <person name="Miao E.A."/>
        </authorList>
    </citation>
    <scope>FUNCTION</scope>
    <scope>ACTIVITY REGULATION</scope>
</reference>
<reference key="13">
    <citation type="journal article" date="2013" name="Science">
        <title>Noncanonical inflammasome activation by intracellular LPS independent of TLR4.</title>
        <authorList>
            <person name="Kayagaki N."/>
            <person name="Wong M.T."/>
            <person name="Stowe I.B."/>
            <person name="Ramani S.R."/>
            <person name="Gonzalez L.C."/>
            <person name="Akashi-Takamura S."/>
            <person name="Miyake K."/>
            <person name="Zhang J."/>
            <person name="Lee W.P."/>
            <person name="Muszynski A."/>
            <person name="Forsbgmerg L.S."/>
            <person name="Carlson R.W."/>
            <person name="Dixit V.M."/>
        </authorList>
    </citation>
    <scope>FUNCTION</scope>
    <scope>ACTIVITY REGULATION</scope>
</reference>
<reference key="14">
    <citation type="journal article" date="2013" name="Science">
        <title>Cytoplasmic LPS activates caspase-11: implications in TLR4-independent endotoxic shock.</title>
        <authorList>
            <person name="Hagar J.A."/>
            <person name="Powell D.A."/>
            <person name="Aachoui Y."/>
            <person name="Ernst R.K."/>
            <person name="Miao E.A."/>
        </authorList>
    </citation>
    <scope>FUNCTION</scope>
    <scope>ACTIVITY REGULATION</scope>
</reference>
<reference key="15">
    <citation type="journal article" date="2014" name="Cell Host Microbe">
        <title>Noncanonical inflammasome activation of caspase-4/caspase-11 mediates epithelial defenses against enteric bacterial pathogens.</title>
        <authorList>
            <person name="Knodler L.A."/>
            <person name="Crowley S.M."/>
            <person name="Sham H.P."/>
            <person name="Yang H."/>
            <person name="Wrande M."/>
            <person name="Ma C."/>
            <person name="Ernst R.K."/>
            <person name="Steele-Mortimer O."/>
            <person name="Celli J."/>
            <person name="Vallance B.A."/>
        </authorList>
    </citation>
    <scope>FUNCTION</scope>
    <scope>DISRUPTION PHENOTYPE</scope>
    <scope>PROTEOLYTIC CLEAVAGE</scope>
</reference>
<reference key="16">
    <citation type="journal article" date="2014" name="Nature">
        <title>Inflammatory caspases are innate immune receptors for intracellular LPS.</title>
        <authorList>
            <person name="Shi J."/>
            <person name="Zhao Y."/>
            <person name="Wang Y."/>
            <person name="Gao W."/>
            <person name="Ding J."/>
            <person name="Li P."/>
            <person name="Hu L."/>
            <person name="Shao F."/>
        </authorList>
    </citation>
    <scope>FUNCTION</scope>
    <scope>ACTIVITY REGULATION</scope>
    <scope>OLIGOMERIZATION</scope>
    <scope>INTERACTION WITH LPS</scope>
    <scope>DOMAIN</scope>
    <scope>MUTAGENESIS OF LYS-19; LYS-38; GLU-40; LYS-53; ARG-54; TRP-55; LYS-62; LYS-63; LYS-64 AND CYS-254</scope>
</reference>
<reference key="17">
    <citation type="journal article" date="2015" name="Eur. J. Immunol.">
        <title>Caspase-11 activates a canonical NLRP3 inflammasome by promoting K(+) efflux.</title>
        <authorList>
            <person name="Ruehl S."/>
            <person name="Broz P."/>
        </authorList>
    </citation>
    <scope>FUNCTION</scope>
</reference>
<reference key="18">
    <citation type="journal article" date="2015" name="Cell Host Microbe">
        <title>Canonical inflammasomes drive IFN-gamma to prime caspase-11 in defense against a cytosol-invasive bacterium.</title>
        <authorList>
            <person name="Aachoui Y."/>
            <person name="Kajiwara Y."/>
            <person name="Leaf I.A."/>
            <person name="Mao D."/>
            <person name="Ting J.P."/>
            <person name="Coers J."/>
            <person name="Aderem A."/>
            <person name="Buxbaum J.D."/>
            <person name="Miao E.A."/>
        </authorList>
    </citation>
    <scope>DISRUPTION PHENOTYPE</scope>
    <scope>INDUCTION BY POLY(I:C)</scope>
</reference>
<reference key="19">
    <citation type="journal article" date="2015" name="Nature">
        <title>Cleavage of GSDMD by inflammatory caspases determines pyroptotic cell death.</title>
        <authorList>
            <person name="Shi J."/>
            <person name="Zhao Y."/>
            <person name="Wang K."/>
            <person name="Shi X."/>
            <person name="Wang Y."/>
            <person name="Huang H."/>
            <person name="Zhuang Y."/>
            <person name="Cai T."/>
            <person name="Wang F."/>
            <person name="Shao F."/>
        </authorList>
    </citation>
    <scope>FUNCTION</scope>
    <scope>GSDMD CLEAVAGE</scope>
</reference>
<reference key="20">
    <citation type="journal article" date="2015" name="Nature">
        <title>Caspase-11 cleaves gasdermin D for non-canonical inflammasome signalling.</title>
        <authorList>
            <person name="Kayagaki N."/>
            <person name="Stowe I.B."/>
            <person name="Lee B.L."/>
            <person name="O'Rourke K."/>
            <person name="Anderson K."/>
            <person name="Warming S."/>
            <person name="Cuellar T."/>
            <person name="Haley B."/>
            <person name="Roose-Girma M."/>
            <person name="Phung Q.T."/>
            <person name="Liu P.S."/>
            <person name="Lill J.R."/>
            <person name="Li H."/>
            <person name="Wu J."/>
            <person name="Kummerfeld S."/>
            <person name="Zhang J."/>
            <person name="Lee W.P."/>
            <person name="Snipas S.J."/>
            <person name="Salvesen G.S."/>
            <person name="Morris L.X."/>
            <person name="Fitzgerald L."/>
            <person name="Zhang Y."/>
            <person name="Bertram E.M."/>
            <person name="Goodnow C.C."/>
            <person name="Dixit V.M."/>
        </authorList>
    </citation>
    <scope>INDUCTION</scope>
    <scope>DISRUPTION PHENOTYPE</scope>
</reference>
<reference key="21">
    <citation type="journal article" date="2016" name="Science">
        <title>An endogenous caspase-11 ligand elicits interleukin-1 release from living dendritic cells.</title>
        <authorList>
            <person name="Zanoni I."/>
            <person name="Tan Y."/>
            <person name="Di Gioia M."/>
            <person name="Broggi A."/>
            <person name="Ruan J."/>
            <person name="Shi J."/>
            <person name="Donado C.A."/>
            <person name="Shao F."/>
            <person name="Wu H."/>
            <person name="Springstead J.R."/>
            <person name="Kagan J.C."/>
        </authorList>
    </citation>
    <scope>FUNCTION</scope>
    <scope>ACTIVITY REGULATION</scope>
</reference>
<reference key="22">
    <citation type="journal article" date="2017" name="Immunity">
        <title>Inflammasome activation triggers caspase-1-mediated cleavage of cGAS to regulate responses to DNA virus infection.</title>
        <authorList>
            <person name="Wang Y."/>
            <person name="Ning X."/>
            <person name="Gao P."/>
            <person name="Wu S."/>
            <person name="Sha M."/>
            <person name="Lv M."/>
            <person name="Zhou X."/>
            <person name="Gao J."/>
            <person name="Fang R."/>
            <person name="Meng G."/>
            <person name="Su X."/>
            <person name="Jiang Z."/>
        </authorList>
    </citation>
    <scope>FUNCTION</scope>
    <scope>MUTAGENESIS OF CYS-254</scope>
</reference>
<reference key="23">
    <citation type="journal article" date="2018" name="Cell">
        <title>The NLRP6 inflammasome recognizes lipoteichoic acid and regulates Gram-positive pathogen infection.</title>
        <authorList>
            <person name="Hara H."/>
            <person name="Seregin S.S."/>
            <person name="Yang D."/>
            <person name="Fukase K."/>
            <person name="Chamaillard M."/>
            <person name="Alnemri E.S."/>
            <person name="Inohara N."/>
            <person name="Chen G.Y."/>
            <person name="Nunez G."/>
        </authorList>
    </citation>
    <scope>FUNCTION</scope>
    <scope>PROTEOLYTIC CLEAVAGE</scope>
    <scope>MUTAGENESIS OF ASP-80; CYS-254; ASP-277 AND ASP-285</scope>
</reference>
<reference key="24">
    <citation type="journal article" date="2018" name="J. Exp. Med.">
        <title>Caspase-11 auto-proteolysis is crucial for noncanonical inflammasome activation.</title>
        <authorList>
            <person name="Lee B.L."/>
            <person name="Stowe I.B."/>
            <person name="Gupta A."/>
            <person name="Kornfeld O.S."/>
            <person name="Roose-Girma M."/>
            <person name="Anderson K."/>
            <person name="Warming S."/>
            <person name="Zhang J."/>
            <person name="Lee W.P."/>
            <person name="Kayagaki N."/>
        </authorList>
    </citation>
    <scope>FUNCTION</scope>
    <scope>CATALYTIC ACTIVITY</scope>
    <scope>PROTEOLYTIC CLEAVAGE</scope>
    <scope>MUTAGENESIS OF CYS-254 AND ASP-285</scope>
</reference>
<reference key="25">
    <citation type="journal article" date="2018" name="Nat. Commun.">
        <title>The oxidized phospholipid oxPAPC protects from septic shock by targeting the non-canonical inflammasome in macrophages.</title>
        <authorList>
            <person name="Chu L.H."/>
            <person name="Indramohan M."/>
            <person name="Ratsimandresy R.A."/>
            <person name="Gangopadhyay A."/>
            <person name="Morris E.P."/>
            <person name="Monack D.M."/>
            <person name="Dorfleutner A."/>
            <person name="Stehlik C."/>
        </authorList>
    </citation>
    <scope>FUNCTION</scope>
    <scope>ACTIVITY REGULATION</scope>
</reference>
<reference key="26">
    <citation type="journal article" date="2018" name="PLoS Pathog.">
        <title>Guanylate-binding protein 5 licenses caspase-11 for Gasdermin-D mediated host resistance to Brucella abortus infection.</title>
        <authorList>
            <person name="Cerqueira D.M."/>
            <person name="Gomes M.T.R."/>
            <person name="Silva A.L.N."/>
            <person name="Rungue M."/>
            <person name="Assis N.R.G."/>
            <person name="Guimaraes E.S."/>
            <person name="Morais S.B."/>
            <person name="Broz P."/>
            <person name="Zamboni D.S."/>
            <person name="Oliveira S.C."/>
        </authorList>
    </citation>
    <scope>FUNCTION</scope>
</reference>
<reference key="27">
    <citation type="journal article" date="2019" name="Nat. Immunol.">
        <title>SERPINB1-mediated checkpoint of inflammatory caspase activation.</title>
        <authorList>
            <person name="Choi Y.J."/>
            <person name="Kim S."/>
            <person name="Choi Y."/>
            <person name="Nielsen T.B."/>
            <person name="Yan J."/>
            <person name="Lu A."/>
            <person name="Ruan J."/>
            <person name="Lee H.R."/>
            <person name="Wu H."/>
            <person name="Spellberg B."/>
            <person name="Jung J.U."/>
        </authorList>
    </citation>
    <scope>FUNCTION</scope>
    <scope>INTERACTION WITH SERPINB1A; SERPINB1B AND SERPINB1C</scope>
</reference>
<reference key="28">
    <citation type="journal article" date="2020" name="J. Biol. Chem.">
        <title>Extended subsite profiling of the pyroptosis effector protein gasdermin D reveals a region recognized by inflammatory caspase-11.</title>
        <authorList>
            <person name="Bibo-Verdugo B."/>
            <person name="Snipas S.J."/>
            <person name="Kolt S."/>
            <person name="Poreba M."/>
            <person name="Salvesen G.S."/>
        </authorList>
    </citation>
    <scope>FUNCTION</scope>
</reference>
<reference key="29">
    <citation type="journal article" date="2021" name="Nature">
        <title>Shigella evades pyroptosis by arginine ADP-riboxanation of caspase-11.</title>
        <authorList>
            <person name="Li Z."/>
            <person name="Liu W."/>
            <person name="Fu J."/>
            <person name="Cheng S."/>
            <person name="Xu Y."/>
            <person name="Wang Z."/>
            <person name="Liu X."/>
            <person name="Shi X."/>
            <person name="Liu Y."/>
            <person name="Qi X."/>
            <person name="Liu X."/>
            <person name="Ding J."/>
            <person name="Shao F."/>
        </authorList>
    </citation>
    <scope>FUNCTION</scope>
    <scope>ADP-RIBOXANATION AT ARG-310 (MICROBIAL INFECTION)</scope>
    <scope>MUTAGENESIS OF ARG-310</scope>
</reference>
<reference key="30">
    <citation type="journal article" date="2023" name="Immunity">
        <title>The orphan receptor Nur77 binds cytoplasmic LPS to activate the non-canonical NLRP3 inflammasome.</title>
        <authorList>
            <person name="Zhu F."/>
            <person name="Ma J."/>
            <person name="Li W."/>
            <person name="Liu Q."/>
            <person name="Qin X."/>
            <person name="Qian Y."/>
            <person name="Wang C."/>
            <person name="Zhang Y."/>
            <person name="Li Y."/>
            <person name="Jiang D."/>
            <person name="Wang S."/>
            <person name="Xia P."/>
        </authorList>
    </citation>
    <scope>FUNCTION</scope>
    <scope>DISRUPTION PHENOTYPE</scope>
</reference>
<reference key="31">
    <citation type="journal article" date="2023" name="Nature">
        <title>Structural insights into cytokine cleavage by inflammatory caspase-4.</title>
        <authorList>
            <person name="Devant P."/>
            <person name="Dong Y."/>
            <person name="Mintseris J."/>
            <person name="Ma W."/>
            <person name="Gygi S.P."/>
            <person name="Wu H."/>
            <person name="Kagan J.C."/>
        </authorList>
    </citation>
    <scope>FUNCTION</scope>
</reference>
<reference key="32">
    <citation type="journal article" date="2023" name="Nature">
        <title>Recognition and maturation of IL-18 by caspase-4 noncanonical inflammasome.</title>
        <authorList>
            <person name="Shi X."/>
            <person name="Sun Q."/>
            <person name="Hou Y."/>
            <person name="Zeng H."/>
            <person name="Cao Y."/>
            <person name="Dong M."/>
            <person name="Ding J."/>
            <person name="Shao F."/>
        </authorList>
    </citation>
    <scope>FUNCTION</scope>
    <scope>MUTAGENESIS OF LEU-289</scope>
</reference>
<reference key="33">
    <citation type="journal article" date="2024" name="Nature">
        <title>Brain endothelial GSDMD activation mediates inflammatory BBB breakdown.</title>
        <authorList>
            <person name="Wei C."/>
            <person name="Jiang W."/>
            <person name="Wang R."/>
            <person name="Zhong H."/>
            <person name="He H."/>
            <person name="Gao X."/>
            <person name="Zhong S."/>
            <person name="Yu F."/>
            <person name="Guo Q."/>
            <person name="Zhang L."/>
            <person name="Schiffelers L.D.J."/>
            <person name="Zhou B."/>
            <person name="Trepel M."/>
            <person name="Schmidt F.I."/>
            <person name="Luo M."/>
            <person name="Shao F."/>
        </authorList>
    </citation>
    <scope>FUNCTION</scope>
    <scope>DISRUPTION PHENOTYPE</scope>
</reference>
<reference evidence="39 40 41 42" key="34">
    <citation type="journal article" date="2020" name="Cell">
        <title>Structural mechanism for GSDMD targeting by autoprocessed caspases in pyroptosis.</title>
        <authorList>
            <person name="Wang K."/>
            <person name="Sun Q."/>
            <person name="Zhong X."/>
            <person name="Zeng M."/>
            <person name="Zeng H."/>
            <person name="Shi X."/>
            <person name="Li Z."/>
            <person name="Wang Y."/>
            <person name="Zhao Q."/>
            <person name="Shao F."/>
            <person name="Ding J."/>
        </authorList>
    </citation>
    <scope>X-RAY CRYSTALLOGRAPHY (1.90 ANGSTROMS) OF 102-265; 287-373; 110-264 AND 286-373 IN COMPLEX WITH GSDMD</scope>
    <scope>FUNCTION</scope>
    <scope>SUBUNIT</scope>
    <scope>PROTEOLYTIC CLEAVAGE</scope>
</reference>